<evidence type="ECO:0000255" key="1"/>
<evidence type="ECO:0000305" key="2"/>
<dbReference type="EC" id="2.-.-.-"/>
<dbReference type="EMBL" id="AE000657">
    <property type="protein sequence ID" value="AAC07577.1"/>
    <property type="molecule type" value="Genomic_DNA"/>
</dbReference>
<dbReference type="RefSeq" id="NP_214167.1">
    <property type="nucleotide sequence ID" value="NC_000918.1"/>
</dbReference>
<dbReference type="RefSeq" id="WP_010881104.1">
    <property type="nucleotide sequence ID" value="NC_000918.1"/>
</dbReference>
<dbReference type="SMR" id="O67601"/>
<dbReference type="FunCoup" id="O67601">
    <property type="interactions" value="78"/>
</dbReference>
<dbReference type="STRING" id="224324.aq_1695a"/>
<dbReference type="CAZy" id="GT83">
    <property type="family name" value="Glycosyltransferase Family 83"/>
</dbReference>
<dbReference type="EnsemblBacteria" id="AAC07577">
    <property type="protein sequence ID" value="AAC07577"/>
    <property type="gene ID" value="aq_1695a"/>
</dbReference>
<dbReference type="KEGG" id="aae:aq_1695a"/>
<dbReference type="eggNOG" id="COG1807">
    <property type="taxonomic scope" value="Bacteria"/>
</dbReference>
<dbReference type="HOGENOM" id="CLU_619528_0_0_0"/>
<dbReference type="InParanoid" id="O67601"/>
<dbReference type="OrthoDB" id="9775035at2"/>
<dbReference type="Proteomes" id="UP000000798">
    <property type="component" value="Chromosome"/>
</dbReference>
<dbReference type="GO" id="GO:0005886">
    <property type="term" value="C:plasma membrane"/>
    <property type="evidence" value="ECO:0000318"/>
    <property type="project" value="GO_Central"/>
</dbReference>
<dbReference type="GO" id="GO:0016763">
    <property type="term" value="F:pentosyltransferase activity"/>
    <property type="evidence" value="ECO:0000318"/>
    <property type="project" value="GO_Central"/>
</dbReference>
<dbReference type="GO" id="GO:0009103">
    <property type="term" value="P:lipopolysaccharide biosynthetic process"/>
    <property type="evidence" value="ECO:0007669"/>
    <property type="project" value="UniProtKB-ARBA"/>
</dbReference>
<dbReference type="GO" id="GO:0010041">
    <property type="term" value="P:response to iron(III) ion"/>
    <property type="evidence" value="ECO:0000318"/>
    <property type="project" value="GO_Central"/>
</dbReference>
<dbReference type="InterPro" id="IPR050297">
    <property type="entry name" value="LipidA_mod_glycosyltrf_83"/>
</dbReference>
<dbReference type="InterPro" id="IPR038731">
    <property type="entry name" value="RgtA/B/C-like"/>
</dbReference>
<dbReference type="PANTHER" id="PTHR33908">
    <property type="entry name" value="MANNOSYLTRANSFERASE YKCB-RELATED"/>
    <property type="match status" value="1"/>
</dbReference>
<dbReference type="PANTHER" id="PTHR33908:SF3">
    <property type="entry name" value="UNDECAPRENYL PHOSPHATE-ALPHA-4-AMINO-4-DEOXY-L-ARABINOSE ARABINOSYL TRANSFERASE"/>
    <property type="match status" value="1"/>
</dbReference>
<dbReference type="Pfam" id="PF13231">
    <property type="entry name" value="PMT_2"/>
    <property type="match status" value="1"/>
</dbReference>
<feature type="chain" id="PRO_0000121502" description="Uncharacterized protein aq_1704">
    <location>
        <begin position="1"/>
        <end position="416"/>
    </location>
</feature>
<feature type="transmembrane region" description="Helical" evidence="1">
    <location>
        <begin position="5"/>
        <end position="25"/>
    </location>
</feature>
<feature type="transmembrane region" description="Helical" evidence="1">
    <location>
        <begin position="84"/>
        <end position="104"/>
    </location>
</feature>
<feature type="transmembrane region" description="Helical" evidence="1">
    <location>
        <begin position="128"/>
        <end position="148"/>
    </location>
</feature>
<feature type="transmembrane region" description="Helical" evidence="1">
    <location>
        <begin position="160"/>
        <end position="180"/>
    </location>
</feature>
<feature type="transmembrane region" description="Helical" evidence="1">
    <location>
        <begin position="192"/>
        <end position="212"/>
    </location>
</feature>
<feature type="transmembrane region" description="Helical" evidence="1">
    <location>
        <begin position="237"/>
        <end position="257"/>
    </location>
</feature>
<feature type="transmembrane region" description="Helical" evidence="1">
    <location>
        <begin position="263"/>
        <end position="283"/>
    </location>
</feature>
<feature type="transmembrane region" description="Helical" evidence="1">
    <location>
        <begin position="288"/>
        <end position="308"/>
    </location>
</feature>
<feature type="transmembrane region" description="Helical" evidence="1">
    <location>
        <begin position="312"/>
        <end position="332"/>
    </location>
</feature>
<proteinExistence type="inferred from homology"/>
<accession>O67601</accession>
<keyword id="KW-1003">Cell membrane</keyword>
<keyword id="KW-0328">Glycosyltransferase</keyword>
<keyword id="KW-0472">Membrane</keyword>
<keyword id="KW-1185">Reference proteome</keyword>
<keyword id="KW-0808">Transferase</keyword>
<keyword id="KW-0812">Transmembrane</keyword>
<keyword id="KW-1133">Transmembrane helix</keyword>
<comment type="subcellular location">
    <subcellularLocation>
        <location evidence="2">Cell membrane</location>
        <topology evidence="2">Multi-pass membrane protein</topology>
    </subcellularLocation>
</comment>
<comment type="similarity">
    <text evidence="2">Belongs to the glycosyltransferase 83 family.</text>
</comment>
<sequence>MKKDLFLISLVSFVFFIFGNWILSLTSLDEGRNFYATLHMLRTGDFIVPYYNCNYRFEKPPMLYWLGSLSFLIFGISEFSARLISGLSAFGTTLLIYFITLKHVSREKALLSALTFPLFIHTWIESRAYVPEFTLVFFSTLGVYLFSIDRFTLGWTALALAFLTKGPVGVILPIGIYLLWRRDLKFLNFKGVLLFILIGFSWYFLMIYKFGFNFFFKFFIFENIYRFTGTYQIHNMPIYFYPLVILVSSILFLPVFLKILKDFDKRLLPFAGWFLLVLVFYSLSKNKLHHYILFSYPALSVIIGFYLTKRYIKYAYIVGSFLLLILMFGVYIYEQKRFTPKAVDFLKNSEPQKLYFYKHENSAIVAYLYRCITKENKFKKGDYVITKKKYLRDFKNYKLLIEGLEFEGKEVLIKVE</sequence>
<protein>
    <recommendedName>
        <fullName>Uncharacterized protein aq_1704</fullName>
        <ecNumber>2.-.-.-</ecNumber>
    </recommendedName>
</protein>
<name>Y1704_AQUAE</name>
<reference key="1">
    <citation type="journal article" date="1998" name="Nature">
        <title>The complete genome of the hyperthermophilic bacterium Aquifex aeolicus.</title>
        <authorList>
            <person name="Deckert G."/>
            <person name="Warren P.V."/>
            <person name="Gaasterland T."/>
            <person name="Young W.G."/>
            <person name="Lenox A.L."/>
            <person name="Graham D.E."/>
            <person name="Overbeek R."/>
            <person name="Snead M.A."/>
            <person name="Keller M."/>
            <person name="Aujay M."/>
            <person name="Huber R."/>
            <person name="Feldman R.A."/>
            <person name="Short J.M."/>
            <person name="Olsen G.J."/>
            <person name="Swanson R.V."/>
        </authorList>
    </citation>
    <scope>NUCLEOTIDE SEQUENCE [LARGE SCALE GENOMIC DNA]</scope>
    <source>
        <strain>VF5</strain>
    </source>
</reference>
<organism>
    <name type="scientific">Aquifex aeolicus (strain VF5)</name>
    <dbReference type="NCBI Taxonomy" id="224324"/>
    <lineage>
        <taxon>Bacteria</taxon>
        <taxon>Pseudomonadati</taxon>
        <taxon>Aquificota</taxon>
        <taxon>Aquificia</taxon>
        <taxon>Aquificales</taxon>
        <taxon>Aquificaceae</taxon>
        <taxon>Aquifex</taxon>
    </lineage>
</organism>
<gene>
    <name type="ordered locus">aq_1704</name>
</gene>